<proteinExistence type="evidence at transcript level"/>
<reference key="1">
    <citation type="journal article" date="2002" name="BMC Genomics">
        <title>Cynomolgus monkey testicular cDNAs for discovery of novel human genes in the human genome sequence.</title>
        <authorList>
            <person name="Osada N."/>
            <person name="Hida M."/>
            <person name="Kusuda J."/>
            <person name="Tanuma R."/>
            <person name="Hirata M."/>
            <person name="Suto Y."/>
            <person name="Hirai M."/>
            <person name="Terao K."/>
            <person name="Sugano S."/>
            <person name="Hashimoto K."/>
        </authorList>
    </citation>
    <scope>NUCLEOTIDE SEQUENCE [LARGE SCALE MRNA]</scope>
    <source>
        <tissue>Testis</tissue>
    </source>
</reference>
<evidence type="ECO:0000250" key="1"/>
<evidence type="ECO:0000250" key="2">
    <source>
        <dbReference type="UniProtKB" id="Q9NU19"/>
    </source>
</evidence>
<evidence type="ECO:0000255" key="3">
    <source>
        <dbReference type="PROSITE-ProRule" id="PRU00163"/>
    </source>
</evidence>
<evidence type="ECO:0000256" key="4">
    <source>
        <dbReference type="SAM" id="MobiDB-lite"/>
    </source>
</evidence>
<sequence length="505" mass="59005">MAADNSKQFWKRSAKLPGSIQPVYGAQHPPLDPRLTKNFIKERSKVGTVPLKNKKASSFHEFARNTSDAWDIGDDEEEDFSSPSFQTLNSKVALATAAQVLENHSKLRVKPERSQSTTSDVPANYKVIKSSSDAQLSRNSSDTCLRNPLHKQQSLPLRPIIPLVARISDQNASGAPPMTVREKTRLEKFRQLLSSHNTDLDELRKCSWPGVPREVRPVTWRLLSGYLPANTERRKLTLQRKREEYFGFIEQYYDSRNEEHHQDTYRQIHIDIPRTNPLIPLFQQPLVQEIFERILFIWAIRHPASGYVQGINDLVTPFFVVFLSEYVEEDVENFDVTNLSQDMLRSIEADSFWCMSKLLDGIQDNYTFAQPGIQKKVKALEELVSRIDEQVHNHFRRYEVEYLQFAFRWMNNLLMRELPLRCTIRLWDTYQSEPEGFSHFHLYVCAAFLIKWRKEILDEEDFQGLLMLLQNLPTIHWGNEEIGLLLAEAYRLKYMFADAPNHYRR</sequence>
<protein>
    <recommendedName>
        <fullName>TBC1 domain family member 22B</fullName>
    </recommendedName>
</protein>
<dbReference type="EMBL" id="AB072775">
    <property type="protein sequence ID" value="BAB69744.1"/>
    <property type="molecule type" value="mRNA"/>
</dbReference>
<dbReference type="RefSeq" id="NP_001306535.1">
    <property type="nucleotide sequence ID" value="NM_001319606.1"/>
</dbReference>
<dbReference type="SMR" id="Q95LL3"/>
<dbReference type="STRING" id="9541.ENSMFAP00000045718"/>
<dbReference type="eggNOG" id="KOG1092">
    <property type="taxonomic scope" value="Eukaryota"/>
</dbReference>
<dbReference type="Proteomes" id="UP000233100">
    <property type="component" value="Unplaced"/>
</dbReference>
<dbReference type="GO" id="GO:0071889">
    <property type="term" value="F:14-3-3 protein binding"/>
    <property type="evidence" value="ECO:0000250"/>
    <property type="project" value="UniProtKB"/>
</dbReference>
<dbReference type="GO" id="GO:0005096">
    <property type="term" value="F:GTPase activator activity"/>
    <property type="evidence" value="ECO:0007669"/>
    <property type="project" value="UniProtKB-KW"/>
</dbReference>
<dbReference type="FunFam" id="1.10.472.80:FF:000001">
    <property type="entry name" value="TBC1 domain family member 22B"/>
    <property type="match status" value="1"/>
</dbReference>
<dbReference type="FunFam" id="1.10.8.270:FF:000004">
    <property type="entry name" value="TBC1 domain family, member 22B"/>
    <property type="match status" value="1"/>
</dbReference>
<dbReference type="Gene3D" id="1.10.8.270">
    <property type="entry name" value="putative rabgap domain of human tbc1 domain family member 14 like domains"/>
    <property type="match status" value="1"/>
</dbReference>
<dbReference type="Gene3D" id="1.10.472.80">
    <property type="entry name" value="Ypt/Rab-GAP domain of gyp1p, domain 3"/>
    <property type="match status" value="1"/>
</dbReference>
<dbReference type="InterPro" id="IPR000195">
    <property type="entry name" value="Rab-GAP-TBC_dom"/>
</dbReference>
<dbReference type="InterPro" id="IPR035969">
    <property type="entry name" value="Rab-GAP_TBC_sf"/>
</dbReference>
<dbReference type="PANTHER" id="PTHR22957:SF462">
    <property type="entry name" value="TBC1 DOMAIN FAMILY MEMBER 22B"/>
    <property type="match status" value="1"/>
</dbReference>
<dbReference type="PANTHER" id="PTHR22957">
    <property type="entry name" value="TBC1 DOMAIN FAMILY MEMBER GTPASE-ACTIVATING PROTEIN"/>
    <property type="match status" value="1"/>
</dbReference>
<dbReference type="Pfam" id="PF00566">
    <property type="entry name" value="RabGAP-TBC"/>
    <property type="match status" value="1"/>
</dbReference>
<dbReference type="SMART" id="SM00164">
    <property type="entry name" value="TBC"/>
    <property type="match status" value="1"/>
</dbReference>
<dbReference type="SUPFAM" id="SSF47923">
    <property type="entry name" value="Ypt/Rab-GAP domain of gyp1p"/>
    <property type="match status" value="2"/>
</dbReference>
<dbReference type="PROSITE" id="PS50086">
    <property type="entry name" value="TBC_RABGAP"/>
    <property type="match status" value="1"/>
</dbReference>
<accession>Q95LL3</accession>
<organism>
    <name type="scientific">Macaca fascicularis</name>
    <name type="common">Crab-eating macaque</name>
    <name type="synonym">Cynomolgus monkey</name>
    <dbReference type="NCBI Taxonomy" id="9541"/>
    <lineage>
        <taxon>Eukaryota</taxon>
        <taxon>Metazoa</taxon>
        <taxon>Chordata</taxon>
        <taxon>Craniata</taxon>
        <taxon>Vertebrata</taxon>
        <taxon>Euteleostomi</taxon>
        <taxon>Mammalia</taxon>
        <taxon>Eutheria</taxon>
        <taxon>Euarchontoglires</taxon>
        <taxon>Primates</taxon>
        <taxon>Haplorrhini</taxon>
        <taxon>Catarrhini</taxon>
        <taxon>Cercopithecidae</taxon>
        <taxon>Cercopithecinae</taxon>
        <taxon>Macaca</taxon>
    </lineage>
</organism>
<name>TB22B_MACFA</name>
<keyword id="KW-0007">Acetylation</keyword>
<keyword id="KW-0343">GTPase activation</keyword>
<keyword id="KW-0597">Phosphoprotein</keyword>
<keyword id="KW-1185">Reference proteome</keyword>
<feature type="initiator methionine" description="Removed" evidence="2">
    <location>
        <position position="1"/>
    </location>
</feature>
<feature type="chain" id="PRO_0000208055" description="TBC1 domain family member 22B">
    <location>
        <begin position="2"/>
        <end position="505"/>
    </location>
</feature>
<feature type="domain" description="Rab-GAP TBC" evidence="3">
    <location>
        <begin position="210"/>
        <end position="434"/>
    </location>
</feature>
<feature type="region of interest" description="Disordered" evidence="4">
    <location>
        <begin position="105"/>
        <end position="146"/>
    </location>
</feature>
<feature type="compositionally biased region" description="Polar residues" evidence="4">
    <location>
        <begin position="129"/>
        <end position="146"/>
    </location>
</feature>
<feature type="modified residue" description="N-acetylalanine" evidence="2">
    <location>
        <position position="2"/>
    </location>
</feature>
<feature type="modified residue" description="Phosphoserine" evidence="2">
    <location>
        <position position="58"/>
    </location>
</feature>
<feature type="modified residue" description="Phosphoserine" evidence="2">
    <location>
        <position position="116"/>
    </location>
</feature>
<feature type="modified residue" description="Phosphoserine" evidence="2">
    <location>
        <position position="154"/>
    </location>
</feature>
<gene>
    <name type="primary">TBC1D22B</name>
    <name type="ORF">QtsA-20424</name>
</gene>
<comment type="function">
    <text evidence="1">May act as a GTPase-activating protein for Rab family protein(s).</text>
</comment>
<comment type="subunit">
    <text evidence="2">Interacts with ACBD3 and ARFGEF1. Interacts with YWHAB, YWHAE, YWHAG, YWHAH, YWHAQ and YWHAZ.</text>
</comment>